<dbReference type="EMBL" id="Y00548">
    <property type="protein sequence ID" value="CAA68623.1"/>
    <property type="status" value="ALT_SEQ"/>
    <property type="molecule type" value="Genomic_DNA"/>
</dbReference>
<dbReference type="PIR" id="C25095">
    <property type="entry name" value="C25095"/>
</dbReference>
<dbReference type="RefSeq" id="WP_011654221.1">
    <property type="nucleotide sequence ID" value="NZ_WIFA01000003.1"/>
</dbReference>
<dbReference type="PDB" id="1FH1">
    <property type="method" value="NMR"/>
    <property type="chains" value="A=1-92"/>
</dbReference>
<dbReference type="PDBsum" id="1FH1"/>
<dbReference type="SMR" id="P04685"/>
<dbReference type="OMA" id="MNTTDAW"/>
<dbReference type="EvolutionaryTrace" id="P04685"/>
<dbReference type="Gene3D" id="1.10.1200.10">
    <property type="entry name" value="ACP-like"/>
    <property type="match status" value="1"/>
</dbReference>
<dbReference type="InterPro" id="IPR036736">
    <property type="entry name" value="ACP-like_sf"/>
</dbReference>
<dbReference type="InterPro" id="IPR009081">
    <property type="entry name" value="PP-bd_ACP"/>
</dbReference>
<dbReference type="InterPro" id="IPR006162">
    <property type="entry name" value="Ppantetheine_attach_site"/>
</dbReference>
<dbReference type="Pfam" id="PF00550">
    <property type="entry name" value="PP-binding"/>
    <property type="match status" value="1"/>
</dbReference>
<dbReference type="SUPFAM" id="SSF47336">
    <property type="entry name" value="ACP-like"/>
    <property type="match status" value="1"/>
</dbReference>
<dbReference type="PROSITE" id="PS50075">
    <property type="entry name" value="CARRIER"/>
    <property type="match status" value="1"/>
</dbReference>
<dbReference type="PROSITE" id="PS00012">
    <property type="entry name" value="PHOSPHOPANTETHEINE"/>
    <property type="match status" value="1"/>
</dbReference>
<proteinExistence type="evidence at protein level"/>
<protein>
    <recommendedName>
        <fullName>Nodulation protein F</fullName>
    </recommendedName>
    <alternativeName>
        <fullName>Host-specificity of nodulation protein A</fullName>
    </alternativeName>
</protein>
<geneLocation type="plasmid">
    <name>sym pRL1JI</name>
</geneLocation>
<keyword id="KW-0002">3D-structure</keyword>
<keyword id="KW-0536">Nodulation</keyword>
<keyword id="KW-0596">Phosphopantetheine</keyword>
<keyword id="KW-0597">Phosphoprotein</keyword>
<keyword id="KW-0614">Plasmid</keyword>
<sequence length="92" mass="9945">MADQLTLEIISAINKLVKAENGERTSVALGEITTDTELTSLGIDSLGLADVLWDLEQLYGIKIEMNTADAWSNLNNIGDVVEAVRGLLTKEV</sequence>
<reference key="1">
    <citation type="journal article" date="1986" name="EMBO J.">
        <title>The Rhizobium leguminosarum nodulation gene nodF encodes a polypeptide similar to acyl-carrier protein and is regulated by nodD plus a factor in pea root exudate.</title>
        <authorList>
            <person name="Shearman C.A."/>
            <person name="Rossen L."/>
            <person name="Johnston A.W.B."/>
            <person name="Downie J.A."/>
        </authorList>
    </citation>
    <scope>NUCLEOTIDE SEQUENCE [GENOMIC DNA]</scope>
    <source>
        <strain>248</strain>
    </source>
</reference>
<reference key="2">
    <citation type="journal article" date="1996" name="FEBS Lett.">
        <title>NMR investigations of the structural properties of the nodulation protein, NodF, from Rhizobium leguminosarum and its homology with Escherichia coli acyl carrier protein.</title>
        <authorList>
            <person name="Ghose R."/>
            <person name="Geiger O."/>
            <person name="Prestegard J.H."/>
        </authorList>
    </citation>
    <scope>STRUCTURE BY NMR</scope>
</reference>
<reference key="3">
    <citation type="journal article" date="2000" name="J. Mol. Biol.">
        <title>Rapid determination of protein folds using residual dipolar couplings.</title>
        <authorList>
            <person name="Fowler C.A."/>
            <person name="Tian F."/>
            <person name="Al-Hashimi H.M."/>
            <person name="Prestegard J.H."/>
        </authorList>
    </citation>
    <scope>STRUCTURE BY NMR</scope>
</reference>
<gene>
    <name type="primary">nodF</name>
    <name type="synonym">hsnA</name>
</gene>
<comment type="function">
    <text>Proposed to synthesize nod factor fatty acyl chain. Involved in trans-2,trans-4,trans-6,cis-11-octadecatetraenoic acid biosynthesis.</text>
</comment>
<comment type="PTM">
    <text evidence="2">4'-phosphopantetheine is transferred from CoA to a specific serine of apo-NodF.</text>
</comment>
<accession>P04685</accession>
<organism>
    <name type="scientific">Rhizobium leguminosarum bv. viciae</name>
    <dbReference type="NCBI Taxonomy" id="387"/>
    <lineage>
        <taxon>Bacteria</taxon>
        <taxon>Pseudomonadati</taxon>
        <taxon>Pseudomonadota</taxon>
        <taxon>Alphaproteobacteria</taxon>
        <taxon>Hyphomicrobiales</taxon>
        <taxon>Rhizobiaceae</taxon>
        <taxon>Rhizobium/Agrobacterium group</taxon>
        <taxon>Rhizobium</taxon>
    </lineage>
</organism>
<evidence type="ECO:0000255" key="1">
    <source>
        <dbReference type="PROSITE-ProRule" id="PRU00258"/>
    </source>
</evidence>
<evidence type="ECO:0000305" key="2"/>
<evidence type="ECO:0007829" key="3">
    <source>
        <dbReference type="PDB" id="1FH1"/>
    </source>
</evidence>
<name>NODF_RHILV</name>
<feature type="chain" id="PRO_0000180261" description="Nodulation protein F">
    <location>
        <begin position="1"/>
        <end position="92"/>
    </location>
</feature>
<feature type="domain" description="Carrier" evidence="1">
    <location>
        <begin position="4"/>
        <end position="88"/>
    </location>
</feature>
<feature type="modified residue" description="O-(pantetheine 4'-phosphoryl)serine" evidence="1">
    <location>
        <position position="45"/>
    </location>
</feature>
<feature type="helix" evidence="3">
    <location>
        <begin position="6"/>
        <end position="16"/>
    </location>
</feature>
<feature type="turn" evidence="3">
    <location>
        <begin position="47"/>
        <end position="50"/>
    </location>
</feature>
<feature type="helix" evidence="3">
    <location>
        <begin position="51"/>
        <end position="57"/>
    </location>
</feature>
<feature type="turn" evidence="3">
    <location>
        <begin position="77"/>
        <end position="79"/>
    </location>
</feature>
<feature type="helix" evidence="3">
    <location>
        <begin position="82"/>
        <end position="85"/>
    </location>
</feature>